<comment type="function">
    <text evidence="1">Synthesizes alpha-1,4-glucan chains using ADP-glucose.</text>
</comment>
<comment type="catalytic activity">
    <reaction evidence="1">
        <text>[(1-&gt;4)-alpha-D-glucosyl](n) + ADP-alpha-D-glucose = [(1-&gt;4)-alpha-D-glucosyl](n+1) + ADP + H(+)</text>
        <dbReference type="Rhea" id="RHEA:18189"/>
        <dbReference type="Rhea" id="RHEA-COMP:9584"/>
        <dbReference type="Rhea" id="RHEA-COMP:9587"/>
        <dbReference type="ChEBI" id="CHEBI:15378"/>
        <dbReference type="ChEBI" id="CHEBI:15444"/>
        <dbReference type="ChEBI" id="CHEBI:57498"/>
        <dbReference type="ChEBI" id="CHEBI:456216"/>
        <dbReference type="EC" id="2.4.1.21"/>
    </reaction>
</comment>
<comment type="pathway">
    <text evidence="1">Glycan biosynthesis; glycogen biosynthesis.</text>
</comment>
<comment type="similarity">
    <text evidence="1">Belongs to the glycosyltransferase 1 family. Bacterial/plant glycogen synthase subfamily.</text>
</comment>
<evidence type="ECO:0000255" key="1">
    <source>
        <dbReference type="HAMAP-Rule" id="MF_00484"/>
    </source>
</evidence>
<feature type="chain" id="PRO_0000188657" description="Glycogen synthase">
    <location>
        <begin position="1"/>
        <end position="438"/>
    </location>
</feature>
<feature type="binding site" evidence="1">
    <location>
        <position position="16"/>
    </location>
    <ligand>
        <name>ADP-alpha-D-glucose</name>
        <dbReference type="ChEBI" id="CHEBI:57498"/>
    </ligand>
</feature>
<proteinExistence type="inferred from homology"/>
<reference key="1">
    <citation type="submission" date="2000-07" db="EMBL/GenBank/DDBJ databases">
        <title>Molecular cloning and expression of Thermus caldophilus glycogen synthase gene.</title>
        <authorList>
            <person name="Kim M."/>
            <person name="Ko J.H."/>
            <person name="Jung B.W."/>
            <person name="Kim J.S."/>
            <person name="Lee D.-S."/>
        </authorList>
    </citation>
    <scope>NUCLEOTIDE SEQUENCE [GENOMIC DNA]</scope>
    <source>
        <strain>GK24</strain>
    </source>
</reference>
<organism>
    <name type="scientific">Thermus caldophilus</name>
    <dbReference type="NCBI Taxonomy" id="272"/>
    <lineage>
        <taxon>Bacteria</taxon>
        <taxon>Thermotogati</taxon>
        <taxon>Deinococcota</taxon>
        <taxon>Deinococci</taxon>
        <taxon>Thermales</taxon>
        <taxon>Thermaceae</taxon>
        <taxon>Thermus</taxon>
    </lineage>
</organism>
<gene>
    <name evidence="1" type="primary">glgA</name>
</gene>
<name>GLGA_THECA</name>
<sequence length="438" mass="48498">MIRVLHLAPEAYPLAKVGGLADVVGALPKALRPLGVEAHVLLPWHGGLEARRVGEVAFAFFGREERAPLGERVEGGVRFLLLGVEGFGRERVYGYPDDAERYLRFALAAKEVARGYDLVHAHDWTAALLALYAPTVYTIHNLAHQGLVDPGLFFSWTGLPWSLFHMEALEFYGRVNLMKGGIVFARRVTTVRPSYAEEIQTPEFGMGLDGVLRRHAGKLRGILNGLDTEVFDPGKDPYLPAPYTREDPSGKARAKEVFRERTGLRPPVLAYVGRLDYQKGLDLVLKALPRLLEMGFRLYVQGVGDGGLQEAFLRAEEENPEGVRFLPAYDEAMARLAYAGAEAVLVPSRFEPCGLVQMIASRYGTPPVARAVGGLKDTVEDGRAGVLFETYHPEGLLYGVLRLFRLGAEEMGLRAMEKDFSWEGPARAYREVYREALG</sequence>
<keyword id="KW-0320">Glycogen biosynthesis</keyword>
<keyword id="KW-0328">Glycosyltransferase</keyword>
<keyword id="KW-0808">Transferase</keyword>
<protein>
    <recommendedName>
        <fullName evidence="1">Glycogen synthase</fullName>
        <ecNumber evidence="1">2.4.1.21</ecNumber>
    </recommendedName>
    <alternativeName>
        <fullName evidence="1">Starch [bacterial glycogen] synthase</fullName>
    </alternativeName>
</protein>
<accession>P58395</accession>
<dbReference type="EC" id="2.4.1.21" evidence="1"/>
<dbReference type="EMBL" id="AF289823">
    <property type="protein sequence ID" value="AAK60012.1"/>
    <property type="molecule type" value="Genomic_DNA"/>
</dbReference>
<dbReference type="SMR" id="P58395"/>
<dbReference type="CAZy" id="GT5">
    <property type="family name" value="Glycosyltransferase Family 5"/>
</dbReference>
<dbReference type="UniPathway" id="UPA00164"/>
<dbReference type="GO" id="GO:0009011">
    <property type="term" value="F:alpha-1,4-glucan glucosyltransferase (ADP-glucose donor) activity"/>
    <property type="evidence" value="ECO:0007669"/>
    <property type="project" value="UniProtKB-UniRule"/>
</dbReference>
<dbReference type="GO" id="GO:0004373">
    <property type="term" value="F:alpha-1,4-glucan glucosyltransferase (UDP-glucose donor) activity"/>
    <property type="evidence" value="ECO:0007669"/>
    <property type="project" value="InterPro"/>
</dbReference>
<dbReference type="GO" id="GO:0005978">
    <property type="term" value="P:glycogen biosynthetic process"/>
    <property type="evidence" value="ECO:0007669"/>
    <property type="project" value="UniProtKB-UniRule"/>
</dbReference>
<dbReference type="CDD" id="cd03791">
    <property type="entry name" value="GT5_Glycogen_synthase_DULL1-like"/>
    <property type="match status" value="1"/>
</dbReference>
<dbReference type="Gene3D" id="3.40.50.2000">
    <property type="entry name" value="Glycogen Phosphorylase B"/>
    <property type="match status" value="2"/>
</dbReference>
<dbReference type="HAMAP" id="MF_00484">
    <property type="entry name" value="Glycogen_synth"/>
    <property type="match status" value="1"/>
</dbReference>
<dbReference type="InterPro" id="IPR001296">
    <property type="entry name" value="Glyco_trans_1"/>
</dbReference>
<dbReference type="InterPro" id="IPR011835">
    <property type="entry name" value="GS/SS"/>
</dbReference>
<dbReference type="InterPro" id="IPR013534">
    <property type="entry name" value="Starch_synth_cat_dom"/>
</dbReference>
<dbReference type="NCBIfam" id="TIGR02095">
    <property type="entry name" value="glgA"/>
    <property type="match status" value="1"/>
</dbReference>
<dbReference type="PANTHER" id="PTHR45825:SF11">
    <property type="entry name" value="ALPHA AMYLASE DOMAIN-CONTAINING PROTEIN"/>
    <property type="match status" value="1"/>
</dbReference>
<dbReference type="PANTHER" id="PTHR45825">
    <property type="entry name" value="GRANULE-BOUND STARCH SYNTHASE 1, CHLOROPLASTIC/AMYLOPLASTIC"/>
    <property type="match status" value="1"/>
</dbReference>
<dbReference type="Pfam" id="PF08323">
    <property type="entry name" value="Glyco_transf_5"/>
    <property type="match status" value="1"/>
</dbReference>
<dbReference type="Pfam" id="PF00534">
    <property type="entry name" value="Glycos_transf_1"/>
    <property type="match status" value="1"/>
</dbReference>
<dbReference type="SUPFAM" id="SSF53756">
    <property type="entry name" value="UDP-Glycosyltransferase/glycogen phosphorylase"/>
    <property type="match status" value="1"/>
</dbReference>